<organism>
    <name type="scientific">Escherichia coli O8 (strain IAI1)</name>
    <dbReference type="NCBI Taxonomy" id="585034"/>
    <lineage>
        <taxon>Bacteria</taxon>
        <taxon>Pseudomonadati</taxon>
        <taxon>Pseudomonadota</taxon>
        <taxon>Gammaproteobacteria</taxon>
        <taxon>Enterobacterales</taxon>
        <taxon>Enterobacteriaceae</taxon>
        <taxon>Escherichia</taxon>
    </lineage>
</organism>
<proteinExistence type="inferred from homology"/>
<feature type="chain" id="PRO_1000136187" description="UPF0227 protein YcfP">
    <location>
        <begin position="1"/>
        <end position="180"/>
    </location>
</feature>
<sequence length="180" mass="21226">MIIYLHGFDSNSPGNHEKVLQLQFIDPDVRLISYSTRHPKHDMQHLLKEVDKMLQLNVDERPLICGVGLGGYWAERIGFLCDIRQVIFNPNLFPYENMEGKIDRPEEYADIATKCVTNFREKNRDRCLVILSRNDEALNSQRTSEELHHYYEIVWDEEQTHKFKNISPHLQRIKAFKTLG</sequence>
<dbReference type="EMBL" id="CU928160">
    <property type="protein sequence ID" value="CAQ98007.1"/>
    <property type="molecule type" value="Genomic_DNA"/>
</dbReference>
<dbReference type="RefSeq" id="WP_000587933.1">
    <property type="nucleotide sequence ID" value="NC_011741.1"/>
</dbReference>
<dbReference type="SMR" id="B7LX42"/>
<dbReference type="ESTHER" id="ecoli-ycfp">
    <property type="family name" value="abh_upf00227"/>
</dbReference>
<dbReference type="GeneID" id="93776300"/>
<dbReference type="KEGG" id="ecr:ECIAI1_1145"/>
<dbReference type="HOGENOM" id="CLU_128769_0_0_6"/>
<dbReference type="FunFam" id="3.40.50.1820:FF:000007">
    <property type="entry name" value="UPF0227 protein YcfP"/>
    <property type="match status" value="1"/>
</dbReference>
<dbReference type="Gene3D" id="3.40.50.1820">
    <property type="entry name" value="alpha/beta hydrolase"/>
    <property type="match status" value="1"/>
</dbReference>
<dbReference type="HAMAP" id="MF_01047">
    <property type="entry name" value="UPF0227"/>
    <property type="match status" value="1"/>
</dbReference>
<dbReference type="InterPro" id="IPR029058">
    <property type="entry name" value="AB_hydrolase_fold"/>
</dbReference>
<dbReference type="InterPro" id="IPR022987">
    <property type="entry name" value="UPF0227"/>
</dbReference>
<dbReference type="InterPro" id="IPR008886">
    <property type="entry name" value="UPF0227/Esterase_YqiA"/>
</dbReference>
<dbReference type="NCBIfam" id="NF003431">
    <property type="entry name" value="PRK04940.1"/>
    <property type="match status" value="1"/>
</dbReference>
<dbReference type="PANTHER" id="PTHR35602">
    <property type="entry name" value="ESTERASE YQIA-RELATED"/>
    <property type="match status" value="1"/>
</dbReference>
<dbReference type="PANTHER" id="PTHR35602:SF2">
    <property type="entry name" value="UPF0227 PROTEIN YCFP"/>
    <property type="match status" value="1"/>
</dbReference>
<dbReference type="Pfam" id="PF05728">
    <property type="entry name" value="UPF0227"/>
    <property type="match status" value="1"/>
</dbReference>
<dbReference type="SUPFAM" id="SSF53474">
    <property type="entry name" value="alpha/beta-Hydrolases"/>
    <property type="match status" value="1"/>
</dbReference>
<comment type="similarity">
    <text evidence="1">Belongs to the UPF0227 family.</text>
</comment>
<name>YCFP_ECO8A</name>
<protein>
    <recommendedName>
        <fullName evidence="1">UPF0227 protein YcfP</fullName>
    </recommendedName>
</protein>
<evidence type="ECO:0000255" key="1">
    <source>
        <dbReference type="HAMAP-Rule" id="MF_01047"/>
    </source>
</evidence>
<gene>
    <name evidence="1" type="primary">ycfP</name>
    <name type="ordered locus">ECIAI1_1145</name>
</gene>
<accession>B7LX42</accession>
<reference key="1">
    <citation type="journal article" date="2009" name="PLoS Genet.">
        <title>Organised genome dynamics in the Escherichia coli species results in highly diverse adaptive paths.</title>
        <authorList>
            <person name="Touchon M."/>
            <person name="Hoede C."/>
            <person name="Tenaillon O."/>
            <person name="Barbe V."/>
            <person name="Baeriswyl S."/>
            <person name="Bidet P."/>
            <person name="Bingen E."/>
            <person name="Bonacorsi S."/>
            <person name="Bouchier C."/>
            <person name="Bouvet O."/>
            <person name="Calteau A."/>
            <person name="Chiapello H."/>
            <person name="Clermont O."/>
            <person name="Cruveiller S."/>
            <person name="Danchin A."/>
            <person name="Diard M."/>
            <person name="Dossat C."/>
            <person name="Karoui M.E."/>
            <person name="Frapy E."/>
            <person name="Garry L."/>
            <person name="Ghigo J.M."/>
            <person name="Gilles A.M."/>
            <person name="Johnson J."/>
            <person name="Le Bouguenec C."/>
            <person name="Lescat M."/>
            <person name="Mangenot S."/>
            <person name="Martinez-Jehanne V."/>
            <person name="Matic I."/>
            <person name="Nassif X."/>
            <person name="Oztas S."/>
            <person name="Petit M.A."/>
            <person name="Pichon C."/>
            <person name="Rouy Z."/>
            <person name="Ruf C.S."/>
            <person name="Schneider D."/>
            <person name="Tourret J."/>
            <person name="Vacherie B."/>
            <person name="Vallenet D."/>
            <person name="Medigue C."/>
            <person name="Rocha E.P.C."/>
            <person name="Denamur E."/>
        </authorList>
    </citation>
    <scope>NUCLEOTIDE SEQUENCE [LARGE SCALE GENOMIC DNA]</scope>
    <source>
        <strain>IAI1</strain>
    </source>
</reference>